<feature type="chain" id="PRO_0000228701" description="Probable phosphatase YcdX">
    <location>
        <begin position="1"/>
        <end position="245"/>
    </location>
</feature>
<feature type="binding site" evidence="1">
    <location>
        <position position="7"/>
    </location>
    <ligand>
        <name>Zn(2+)</name>
        <dbReference type="ChEBI" id="CHEBI:29105"/>
        <label>1</label>
    </ligand>
</feature>
<feature type="binding site" evidence="1">
    <location>
        <position position="9"/>
    </location>
    <ligand>
        <name>Zn(2+)</name>
        <dbReference type="ChEBI" id="CHEBI:29105"/>
        <label>1</label>
    </ligand>
</feature>
<feature type="binding site" evidence="1">
    <location>
        <position position="15"/>
    </location>
    <ligand>
        <name>Zn(2+)</name>
        <dbReference type="ChEBI" id="CHEBI:29105"/>
        <label>2</label>
    </ligand>
</feature>
<feature type="binding site" evidence="1">
    <location>
        <position position="40"/>
    </location>
    <ligand>
        <name>Zn(2+)</name>
        <dbReference type="ChEBI" id="CHEBI:29105"/>
        <label>2</label>
    </ligand>
</feature>
<feature type="binding site" evidence="1">
    <location>
        <position position="73"/>
    </location>
    <ligand>
        <name>Zn(2+)</name>
        <dbReference type="ChEBI" id="CHEBI:29105"/>
        <label>1</label>
    </ligand>
</feature>
<feature type="binding site" evidence="1">
    <location>
        <position position="73"/>
    </location>
    <ligand>
        <name>Zn(2+)</name>
        <dbReference type="ChEBI" id="CHEBI:29105"/>
        <label>3</label>
    </ligand>
</feature>
<feature type="binding site" evidence="1">
    <location>
        <position position="101"/>
    </location>
    <ligand>
        <name>Zn(2+)</name>
        <dbReference type="ChEBI" id="CHEBI:29105"/>
        <label>3</label>
    </ligand>
</feature>
<feature type="binding site" evidence="1">
    <location>
        <position position="131"/>
    </location>
    <ligand>
        <name>Zn(2+)</name>
        <dbReference type="ChEBI" id="CHEBI:29105"/>
        <label>3</label>
    </ligand>
</feature>
<feature type="binding site" evidence="1">
    <location>
        <position position="192"/>
    </location>
    <ligand>
        <name>Zn(2+)</name>
        <dbReference type="ChEBI" id="CHEBI:29105"/>
        <label>1</label>
    </ligand>
</feature>
<feature type="binding site" evidence="1">
    <location>
        <position position="194"/>
    </location>
    <ligand>
        <name>Zn(2+)</name>
        <dbReference type="ChEBI" id="CHEBI:29105"/>
        <label>2</label>
    </ligand>
</feature>
<accession>Q31Z90</accession>
<evidence type="ECO:0000255" key="1">
    <source>
        <dbReference type="HAMAP-Rule" id="MF_01561"/>
    </source>
</evidence>
<proteinExistence type="inferred from homology"/>
<gene>
    <name evidence="1" type="primary">ycdX</name>
    <name type="ordered locus">SBO_2034</name>
</gene>
<reference key="1">
    <citation type="journal article" date="2005" name="Nucleic Acids Res.">
        <title>Genome dynamics and diversity of Shigella species, the etiologic agents of bacillary dysentery.</title>
        <authorList>
            <person name="Yang F."/>
            <person name="Yang J."/>
            <person name="Zhang X."/>
            <person name="Chen L."/>
            <person name="Jiang Y."/>
            <person name="Yan Y."/>
            <person name="Tang X."/>
            <person name="Wang J."/>
            <person name="Xiong Z."/>
            <person name="Dong J."/>
            <person name="Xue Y."/>
            <person name="Zhu Y."/>
            <person name="Xu X."/>
            <person name="Sun L."/>
            <person name="Chen S."/>
            <person name="Nie H."/>
            <person name="Peng J."/>
            <person name="Xu J."/>
            <person name="Wang Y."/>
            <person name="Yuan Z."/>
            <person name="Wen Y."/>
            <person name="Yao Z."/>
            <person name="Shen Y."/>
            <person name="Qiang B."/>
            <person name="Hou Y."/>
            <person name="Yu J."/>
            <person name="Jin Q."/>
        </authorList>
    </citation>
    <scope>NUCLEOTIDE SEQUENCE [LARGE SCALE GENOMIC DNA]</scope>
    <source>
        <strain>Sb227</strain>
    </source>
</reference>
<name>YCDX_SHIBS</name>
<dbReference type="EC" id="3.1.3.-" evidence="1"/>
<dbReference type="EMBL" id="CP000036">
    <property type="protein sequence ID" value="ABB66618.1"/>
    <property type="molecule type" value="Genomic_DNA"/>
</dbReference>
<dbReference type="RefSeq" id="WP_000283664.1">
    <property type="nucleotide sequence ID" value="NC_007613.1"/>
</dbReference>
<dbReference type="SMR" id="Q31Z90"/>
<dbReference type="GeneID" id="93776384"/>
<dbReference type="KEGG" id="sbo:SBO_2034"/>
<dbReference type="HOGENOM" id="CLU_061999_0_1_6"/>
<dbReference type="Proteomes" id="UP000007067">
    <property type="component" value="Chromosome"/>
</dbReference>
<dbReference type="GO" id="GO:0005829">
    <property type="term" value="C:cytosol"/>
    <property type="evidence" value="ECO:0007669"/>
    <property type="project" value="TreeGrafter"/>
</dbReference>
<dbReference type="GO" id="GO:0016791">
    <property type="term" value="F:phosphatase activity"/>
    <property type="evidence" value="ECO:0007669"/>
    <property type="project" value="UniProtKB-UniRule"/>
</dbReference>
<dbReference type="GO" id="GO:0008270">
    <property type="term" value="F:zinc ion binding"/>
    <property type="evidence" value="ECO:0007669"/>
    <property type="project" value="UniProtKB-UniRule"/>
</dbReference>
<dbReference type="GO" id="GO:0071978">
    <property type="term" value="P:bacterial-type flagellum-dependent swarming motility"/>
    <property type="evidence" value="ECO:0007669"/>
    <property type="project" value="TreeGrafter"/>
</dbReference>
<dbReference type="CDD" id="cd07437">
    <property type="entry name" value="PHP_HisPPase_Ycdx_like"/>
    <property type="match status" value="1"/>
</dbReference>
<dbReference type="FunFam" id="3.20.20.140:FF:000008">
    <property type="entry name" value="Probable phosphatase YcdX"/>
    <property type="match status" value="1"/>
</dbReference>
<dbReference type="Gene3D" id="3.20.20.140">
    <property type="entry name" value="Metal-dependent hydrolases"/>
    <property type="match status" value="1"/>
</dbReference>
<dbReference type="HAMAP" id="MF_01561">
    <property type="entry name" value="YcdX_phosphat"/>
    <property type="match status" value="1"/>
</dbReference>
<dbReference type="InterPro" id="IPR023710">
    <property type="entry name" value="Phosphatase_YcdX_put"/>
</dbReference>
<dbReference type="InterPro" id="IPR004013">
    <property type="entry name" value="PHP_dom"/>
</dbReference>
<dbReference type="InterPro" id="IPR050243">
    <property type="entry name" value="PHP_phosphatase"/>
</dbReference>
<dbReference type="InterPro" id="IPR003141">
    <property type="entry name" value="Pol/His_phosphatase_N"/>
</dbReference>
<dbReference type="InterPro" id="IPR016195">
    <property type="entry name" value="Pol/histidinol_Pase-like"/>
</dbReference>
<dbReference type="NCBIfam" id="NF006702">
    <property type="entry name" value="PRK09248.1"/>
    <property type="match status" value="1"/>
</dbReference>
<dbReference type="PANTHER" id="PTHR36928">
    <property type="entry name" value="PHOSPHATASE YCDX-RELATED"/>
    <property type="match status" value="1"/>
</dbReference>
<dbReference type="PANTHER" id="PTHR36928:SF1">
    <property type="entry name" value="PHOSPHATASE YCDX-RELATED"/>
    <property type="match status" value="1"/>
</dbReference>
<dbReference type="Pfam" id="PF02811">
    <property type="entry name" value="PHP"/>
    <property type="match status" value="1"/>
</dbReference>
<dbReference type="SMART" id="SM00481">
    <property type="entry name" value="POLIIIAc"/>
    <property type="match status" value="1"/>
</dbReference>
<dbReference type="SUPFAM" id="SSF89550">
    <property type="entry name" value="PHP domain-like"/>
    <property type="match status" value="1"/>
</dbReference>
<comment type="cofactor">
    <cofactor evidence="1">
        <name>Zn(2+)</name>
        <dbReference type="ChEBI" id="CHEBI:29105"/>
    </cofactor>
    <text evidence="1">Binds 3 Zn(2+) ions per subunit.</text>
</comment>
<comment type="subunit">
    <text evidence="1">Homotrimer.</text>
</comment>
<comment type="similarity">
    <text evidence="1">Belongs to the PHP family.</text>
</comment>
<keyword id="KW-0378">Hydrolase</keyword>
<keyword id="KW-0479">Metal-binding</keyword>
<keyword id="KW-0862">Zinc</keyword>
<organism>
    <name type="scientific">Shigella boydii serotype 4 (strain Sb227)</name>
    <dbReference type="NCBI Taxonomy" id="300268"/>
    <lineage>
        <taxon>Bacteria</taxon>
        <taxon>Pseudomonadati</taxon>
        <taxon>Pseudomonadota</taxon>
        <taxon>Gammaproteobacteria</taxon>
        <taxon>Enterobacterales</taxon>
        <taxon>Enterobacteriaceae</taxon>
        <taxon>Shigella</taxon>
    </lineage>
</organism>
<protein>
    <recommendedName>
        <fullName evidence="1">Probable phosphatase YcdX</fullName>
        <ecNumber evidence="1">3.1.3.-</ecNumber>
    </recommendedName>
</protein>
<sequence length="245" mass="26832">MYPVDLHMHTVASTHAYSTLSDYIAQAKQKGIKLFAITDHGPDMEDAPHHWHFINMRIWPRVVDGVGILRGIEANIKNVDGEIDCSGKMFDSLDLIIAGFHEPVFAPHDKATNTQAMIATIASGNVHIISHPGNPKYEIDVKAVAEAAAKHQVALEINNSSFLHSRKGSEDNCRAVAAAVRDAGGWVALGSDSHTAFTMGEFEECLKILDAVDFPPERILNVSPRRLLNFLESRGMAPIAEFADL</sequence>